<proteinExistence type="inferred from homology"/>
<sequence length="637" mass="72723">MQDVVNSEKLKFDAEVGKVLKLVIHSLYTNKDIFLRELISNASDACDKLRYESLSNQDLIDGDTDFKIVISVDQDKNRLYISDNGIGMNRQDLIDNLGTIAHSGTQRFLDAINNETSSQGVVELIGKFGVGFYSAFMVASEVIVESRKAGESIGYQWRSAGDGEFIISQLEDGQFPRGTKITLILKTEESEFVDKFRIEHIVTTYSYHINYPVYFLNDAGEEEKLNSDAAIWTKSKDEISAQEHQNFFRSVAHVGGEPWMILHNKNEGVIEYTNLLYIPSIKPFDLFHPDRKCSVKLYVNKVFITEDNVQIIPQYLRFLKGIIDSSDLPLNISRETLQNNKVIEKIKQSIVKRVLSELKKKAENDINDYKKFWENFGSVLKEGLCESMNTEFREELLSACRFYSTNSDDSLISLEDYIERMKEGQDNIYYLTGNDLDSIKKSPQLEGFVSRGIEVILLIDPVDDFWTNVVTDYQRVPLKSVIRADEDLEKLAHLKKDEEVGESKDENPDSKEKVDAFVKYAIQVLDKLVSGVRVSKKLTNSPVCLAVADGSMDIRMERFLREQKQLNYKSTKILEINPKHPIVSRMIDEYANTGENAVLDNMLHLLLGQACILEGEELEDVSSFAERMNNVLVKVYQ</sequence>
<name>HTPG_EHRCJ</name>
<organism>
    <name type="scientific">Ehrlichia canis (strain Jake)</name>
    <dbReference type="NCBI Taxonomy" id="269484"/>
    <lineage>
        <taxon>Bacteria</taxon>
        <taxon>Pseudomonadati</taxon>
        <taxon>Pseudomonadota</taxon>
        <taxon>Alphaproteobacteria</taxon>
        <taxon>Rickettsiales</taxon>
        <taxon>Anaplasmataceae</taxon>
        <taxon>Ehrlichia</taxon>
    </lineage>
</organism>
<dbReference type="EMBL" id="CP000107">
    <property type="protein sequence ID" value="AAZ68286.1"/>
    <property type="molecule type" value="Genomic_DNA"/>
</dbReference>
<dbReference type="RefSeq" id="WP_011304364.1">
    <property type="nucleotide sequence ID" value="NC_007354.1"/>
</dbReference>
<dbReference type="SMR" id="Q3YSL9"/>
<dbReference type="FunCoup" id="Q3YSL9">
    <property type="interactions" value="262"/>
</dbReference>
<dbReference type="STRING" id="269484.Ecaj_0237"/>
<dbReference type="KEGG" id="ecn:Ecaj_0237"/>
<dbReference type="eggNOG" id="COG0326">
    <property type="taxonomic scope" value="Bacteria"/>
</dbReference>
<dbReference type="HOGENOM" id="CLU_006684_3_0_5"/>
<dbReference type="InParanoid" id="Q3YSL9"/>
<dbReference type="Proteomes" id="UP000000435">
    <property type="component" value="Chromosome"/>
</dbReference>
<dbReference type="GO" id="GO:0005737">
    <property type="term" value="C:cytoplasm"/>
    <property type="evidence" value="ECO:0007669"/>
    <property type="project" value="UniProtKB-SubCell"/>
</dbReference>
<dbReference type="GO" id="GO:0005524">
    <property type="term" value="F:ATP binding"/>
    <property type="evidence" value="ECO:0007669"/>
    <property type="project" value="UniProtKB-UniRule"/>
</dbReference>
<dbReference type="GO" id="GO:0016887">
    <property type="term" value="F:ATP hydrolysis activity"/>
    <property type="evidence" value="ECO:0007669"/>
    <property type="project" value="InterPro"/>
</dbReference>
<dbReference type="GO" id="GO:0140662">
    <property type="term" value="F:ATP-dependent protein folding chaperone"/>
    <property type="evidence" value="ECO:0007669"/>
    <property type="project" value="InterPro"/>
</dbReference>
<dbReference type="GO" id="GO:0051082">
    <property type="term" value="F:unfolded protein binding"/>
    <property type="evidence" value="ECO:0007669"/>
    <property type="project" value="UniProtKB-UniRule"/>
</dbReference>
<dbReference type="CDD" id="cd16927">
    <property type="entry name" value="HATPase_Hsp90-like"/>
    <property type="match status" value="1"/>
</dbReference>
<dbReference type="FunFam" id="3.30.565.10:FF:000009">
    <property type="entry name" value="Molecular chaperone HtpG"/>
    <property type="match status" value="1"/>
</dbReference>
<dbReference type="Gene3D" id="3.30.230.80">
    <property type="match status" value="1"/>
</dbReference>
<dbReference type="Gene3D" id="3.40.50.11260">
    <property type="match status" value="1"/>
</dbReference>
<dbReference type="Gene3D" id="1.20.120.790">
    <property type="entry name" value="Heat shock protein 90, C-terminal domain"/>
    <property type="match status" value="1"/>
</dbReference>
<dbReference type="Gene3D" id="3.30.565.10">
    <property type="entry name" value="Histidine kinase-like ATPase, C-terminal domain"/>
    <property type="match status" value="1"/>
</dbReference>
<dbReference type="HAMAP" id="MF_00505">
    <property type="entry name" value="HSP90"/>
    <property type="match status" value="1"/>
</dbReference>
<dbReference type="InterPro" id="IPR036890">
    <property type="entry name" value="HATPase_C_sf"/>
</dbReference>
<dbReference type="InterPro" id="IPR019805">
    <property type="entry name" value="Heat_shock_protein_90_CS"/>
</dbReference>
<dbReference type="InterPro" id="IPR037196">
    <property type="entry name" value="HSP90_C"/>
</dbReference>
<dbReference type="InterPro" id="IPR001404">
    <property type="entry name" value="Hsp90_fam"/>
</dbReference>
<dbReference type="InterPro" id="IPR020575">
    <property type="entry name" value="Hsp90_N"/>
</dbReference>
<dbReference type="InterPro" id="IPR020568">
    <property type="entry name" value="Ribosomal_Su5_D2-typ_SF"/>
</dbReference>
<dbReference type="NCBIfam" id="NF003555">
    <property type="entry name" value="PRK05218.1"/>
    <property type="match status" value="1"/>
</dbReference>
<dbReference type="PANTHER" id="PTHR11528">
    <property type="entry name" value="HEAT SHOCK PROTEIN 90 FAMILY MEMBER"/>
    <property type="match status" value="1"/>
</dbReference>
<dbReference type="Pfam" id="PF13589">
    <property type="entry name" value="HATPase_c_3"/>
    <property type="match status" value="1"/>
</dbReference>
<dbReference type="Pfam" id="PF00183">
    <property type="entry name" value="HSP90"/>
    <property type="match status" value="1"/>
</dbReference>
<dbReference type="PIRSF" id="PIRSF002583">
    <property type="entry name" value="Hsp90"/>
    <property type="match status" value="1"/>
</dbReference>
<dbReference type="PRINTS" id="PR00775">
    <property type="entry name" value="HEATSHOCK90"/>
</dbReference>
<dbReference type="SUPFAM" id="SSF55874">
    <property type="entry name" value="ATPase domain of HSP90 chaperone/DNA topoisomerase II/histidine kinase"/>
    <property type="match status" value="1"/>
</dbReference>
<dbReference type="SUPFAM" id="SSF110942">
    <property type="entry name" value="HSP90 C-terminal domain"/>
    <property type="match status" value="1"/>
</dbReference>
<dbReference type="SUPFAM" id="SSF54211">
    <property type="entry name" value="Ribosomal protein S5 domain 2-like"/>
    <property type="match status" value="1"/>
</dbReference>
<dbReference type="PROSITE" id="PS00298">
    <property type="entry name" value="HSP90"/>
    <property type="match status" value="1"/>
</dbReference>
<keyword id="KW-0067">ATP-binding</keyword>
<keyword id="KW-0143">Chaperone</keyword>
<keyword id="KW-0963">Cytoplasm</keyword>
<keyword id="KW-0547">Nucleotide-binding</keyword>
<keyword id="KW-0346">Stress response</keyword>
<gene>
    <name evidence="1" type="primary">htpG</name>
    <name type="ordered locus">Ecaj_0237</name>
</gene>
<comment type="function">
    <text evidence="1">Molecular chaperone. Has ATPase activity.</text>
</comment>
<comment type="subunit">
    <text evidence="1">Homodimer.</text>
</comment>
<comment type="subcellular location">
    <subcellularLocation>
        <location evidence="1">Cytoplasm</location>
    </subcellularLocation>
</comment>
<comment type="similarity">
    <text evidence="1">Belongs to the heat shock protein 90 family.</text>
</comment>
<feature type="chain" id="PRO_0000224204" description="Chaperone protein HtpG">
    <location>
        <begin position="1"/>
        <end position="637"/>
    </location>
</feature>
<feature type="region of interest" description="A; substrate-binding" evidence="1">
    <location>
        <begin position="1"/>
        <end position="334"/>
    </location>
</feature>
<feature type="region of interest" description="B" evidence="1">
    <location>
        <begin position="335"/>
        <end position="558"/>
    </location>
</feature>
<feature type="region of interest" description="C" evidence="1">
    <location>
        <begin position="559"/>
        <end position="637"/>
    </location>
</feature>
<evidence type="ECO:0000255" key="1">
    <source>
        <dbReference type="HAMAP-Rule" id="MF_00505"/>
    </source>
</evidence>
<reference key="1">
    <citation type="journal article" date="2006" name="J. Bacteriol.">
        <title>The genome of the obligately intracellular bacterium Ehrlichia canis reveals themes of complex membrane structure and immune evasion strategies.</title>
        <authorList>
            <person name="Mavromatis K."/>
            <person name="Doyle C.K."/>
            <person name="Lykidis A."/>
            <person name="Ivanova N."/>
            <person name="Francino M.P."/>
            <person name="Chain P."/>
            <person name="Shin M."/>
            <person name="Malfatti S."/>
            <person name="Larimer F."/>
            <person name="Copeland A."/>
            <person name="Detter J.C."/>
            <person name="Land M."/>
            <person name="Richardson P.M."/>
            <person name="Yu X.J."/>
            <person name="Walker D.H."/>
            <person name="McBride J.W."/>
            <person name="Kyrpides N.C."/>
        </authorList>
    </citation>
    <scope>NUCLEOTIDE SEQUENCE [LARGE SCALE GENOMIC DNA]</scope>
    <source>
        <strain>Jake</strain>
    </source>
</reference>
<protein>
    <recommendedName>
        <fullName evidence="1">Chaperone protein HtpG</fullName>
    </recommendedName>
    <alternativeName>
        <fullName evidence="1">Heat shock protein HtpG</fullName>
    </alternativeName>
    <alternativeName>
        <fullName evidence="1">High temperature protein G</fullName>
    </alternativeName>
</protein>
<accession>Q3YSL9</accession>